<comment type="function">
    <text evidence="1">Key component of the proton channel; it plays a direct role in the translocation of protons across the membrane.</text>
</comment>
<comment type="subunit">
    <text evidence="1">F-type ATPases have 2 components, CF(1) - the catalytic core - and CF(0) - the membrane proton channel. CF(1) has five subunits: alpha(3), beta(3), gamma(1), delta(1), epsilon(1). CF(0) has three main subunits: a(1), b(2) and c(9-12). The alpha and beta chains form an alternating ring which encloses part of the gamma chain. CF(1) is attached to CF(0) by a central stalk formed by the gamma and epsilon chains, while a peripheral stalk is formed by the delta and b chains.</text>
</comment>
<comment type="subcellular location">
    <subcellularLocation>
        <location evidence="1">Cell inner membrane</location>
        <topology evidence="1">Multi-pass membrane protein</topology>
    </subcellularLocation>
</comment>
<comment type="similarity">
    <text evidence="1">Belongs to the ATPase A chain family.</text>
</comment>
<name>ATP6_ESCF3</name>
<reference key="1">
    <citation type="journal article" date="2009" name="PLoS Genet.">
        <title>Organised genome dynamics in the Escherichia coli species results in highly diverse adaptive paths.</title>
        <authorList>
            <person name="Touchon M."/>
            <person name="Hoede C."/>
            <person name="Tenaillon O."/>
            <person name="Barbe V."/>
            <person name="Baeriswyl S."/>
            <person name="Bidet P."/>
            <person name="Bingen E."/>
            <person name="Bonacorsi S."/>
            <person name="Bouchier C."/>
            <person name="Bouvet O."/>
            <person name="Calteau A."/>
            <person name="Chiapello H."/>
            <person name="Clermont O."/>
            <person name="Cruveiller S."/>
            <person name="Danchin A."/>
            <person name="Diard M."/>
            <person name="Dossat C."/>
            <person name="Karoui M.E."/>
            <person name="Frapy E."/>
            <person name="Garry L."/>
            <person name="Ghigo J.M."/>
            <person name="Gilles A.M."/>
            <person name="Johnson J."/>
            <person name="Le Bouguenec C."/>
            <person name="Lescat M."/>
            <person name="Mangenot S."/>
            <person name="Martinez-Jehanne V."/>
            <person name="Matic I."/>
            <person name="Nassif X."/>
            <person name="Oztas S."/>
            <person name="Petit M.A."/>
            <person name="Pichon C."/>
            <person name="Rouy Z."/>
            <person name="Ruf C.S."/>
            <person name="Schneider D."/>
            <person name="Tourret J."/>
            <person name="Vacherie B."/>
            <person name="Vallenet D."/>
            <person name="Medigue C."/>
            <person name="Rocha E.P.C."/>
            <person name="Denamur E."/>
        </authorList>
    </citation>
    <scope>NUCLEOTIDE SEQUENCE [LARGE SCALE GENOMIC DNA]</scope>
    <source>
        <strain>ATCC 35469 / DSM 13698 / BCRC 15582 / CCUG 18766 / IAM 14443 / JCM 21226 / LMG 7866 / NBRC 102419 / NCTC 12128 / CDC 0568-73</strain>
    </source>
</reference>
<feature type="chain" id="PRO_1000145276" description="ATP synthase subunit a">
    <location>
        <begin position="1"/>
        <end position="271"/>
    </location>
</feature>
<feature type="transmembrane region" description="Helical" evidence="1">
    <location>
        <begin position="40"/>
        <end position="60"/>
    </location>
</feature>
<feature type="transmembrane region" description="Helical" evidence="1">
    <location>
        <begin position="100"/>
        <end position="120"/>
    </location>
</feature>
<feature type="transmembrane region" description="Helical" evidence="1">
    <location>
        <begin position="146"/>
        <end position="166"/>
    </location>
</feature>
<feature type="transmembrane region" description="Helical" evidence="1">
    <location>
        <begin position="220"/>
        <end position="240"/>
    </location>
</feature>
<feature type="transmembrane region" description="Helical" evidence="1">
    <location>
        <begin position="242"/>
        <end position="262"/>
    </location>
</feature>
<protein>
    <recommendedName>
        <fullName evidence="1">ATP synthase subunit a</fullName>
    </recommendedName>
    <alternativeName>
        <fullName evidence="1">ATP synthase F0 sector subunit a</fullName>
    </alternativeName>
    <alternativeName>
        <fullName evidence="1">F-ATPase subunit 6</fullName>
    </alternativeName>
</protein>
<sequence>MASENMTPQDYIGHHLNNLQLDLRTFSLVDPHNPPATFWTINIDSMFFSVVLGLLFLVLFRSVAKKATSGVPGKFQTAIELVIGFVNGSVKDMYHGKSKLIAPLALTIFVWVFLMNLMDLLPIDLLPYIAEHVLGLPALRVVPSADVNVTLSMALGVFILILFYSIKMKGIGGFTKELTLQPFNHWAFIPVNLILEGVSLLSKPVSLGLRLFGNMYAGELIFILIAGLLPWWSQWILNVPWAIFHILIITLQAFIFMVLTIVYLSMASEEH</sequence>
<proteinExistence type="inferred from homology"/>
<evidence type="ECO:0000255" key="1">
    <source>
        <dbReference type="HAMAP-Rule" id="MF_01393"/>
    </source>
</evidence>
<keyword id="KW-0066">ATP synthesis</keyword>
<keyword id="KW-0997">Cell inner membrane</keyword>
<keyword id="KW-1003">Cell membrane</keyword>
<keyword id="KW-0138">CF(0)</keyword>
<keyword id="KW-0375">Hydrogen ion transport</keyword>
<keyword id="KW-0406">Ion transport</keyword>
<keyword id="KW-0472">Membrane</keyword>
<keyword id="KW-0812">Transmembrane</keyword>
<keyword id="KW-1133">Transmembrane helix</keyword>
<keyword id="KW-0813">Transport</keyword>
<accession>B7LK83</accession>
<gene>
    <name evidence="1" type="primary">atpB</name>
    <name type="ordered locus">EFER_4037</name>
</gene>
<organism>
    <name type="scientific">Escherichia fergusonii (strain ATCC 35469 / DSM 13698 / CCUG 18766 / IAM 14443 / JCM 21226 / LMG 7866 / NBRC 102419 / NCTC 12128 / CDC 0568-73)</name>
    <dbReference type="NCBI Taxonomy" id="585054"/>
    <lineage>
        <taxon>Bacteria</taxon>
        <taxon>Pseudomonadati</taxon>
        <taxon>Pseudomonadota</taxon>
        <taxon>Gammaproteobacteria</taxon>
        <taxon>Enterobacterales</taxon>
        <taxon>Enterobacteriaceae</taxon>
        <taxon>Escherichia</taxon>
    </lineage>
</organism>
<dbReference type="EMBL" id="CU928158">
    <property type="protein sequence ID" value="CAQ91471.1"/>
    <property type="molecule type" value="Genomic_DNA"/>
</dbReference>
<dbReference type="RefSeq" id="WP_000135618.1">
    <property type="nucleotide sequence ID" value="NC_011740.1"/>
</dbReference>
<dbReference type="SMR" id="B7LK83"/>
<dbReference type="GeneID" id="86948620"/>
<dbReference type="KEGG" id="efe:EFER_4037"/>
<dbReference type="HOGENOM" id="CLU_041018_1_0_6"/>
<dbReference type="OrthoDB" id="9789241at2"/>
<dbReference type="Proteomes" id="UP000000745">
    <property type="component" value="Chromosome"/>
</dbReference>
<dbReference type="GO" id="GO:0005886">
    <property type="term" value="C:plasma membrane"/>
    <property type="evidence" value="ECO:0007669"/>
    <property type="project" value="UniProtKB-SubCell"/>
</dbReference>
<dbReference type="GO" id="GO:0045259">
    <property type="term" value="C:proton-transporting ATP synthase complex"/>
    <property type="evidence" value="ECO:0007669"/>
    <property type="project" value="UniProtKB-KW"/>
</dbReference>
<dbReference type="GO" id="GO:0046933">
    <property type="term" value="F:proton-transporting ATP synthase activity, rotational mechanism"/>
    <property type="evidence" value="ECO:0007669"/>
    <property type="project" value="UniProtKB-UniRule"/>
</dbReference>
<dbReference type="GO" id="GO:0042777">
    <property type="term" value="P:proton motive force-driven plasma membrane ATP synthesis"/>
    <property type="evidence" value="ECO:0007669"/>
    <property type="project" value="TreeGrafter"/>
</dbReference>
<dbReference type="CDD" id="cd00310">
    <property type="entry name" value="ATP-synt_Fo_a_6"/>
    <property type="match status" value="1"/>
</dbReference>
<dbReference type="FunFam" id="1.20.120.220:FF:000002">
    <property type="entry name" value="ATP synthase subunit a"/>
    <property type="match status" value="1"/>
</dbReference>
<dbReference type="Gene3D" id="1.20.120.220">
    <property type="entry name" value="ATP synthase, F0 complex, subunit A"/>
    <property type="match status" value="1"/>
</dbReference>
<dbReference type="HAMAP" id="MF_01393">
    <property type="entry name" value="ATP_synth_a_bact"/>
    <property type="match status" value="1"/>
</dbReference>
<dbReference type="InterPro" id="IPR045082">
    <property type="entry name" value="ATP_syn_F0_a_bact/chloroplast"/>
</dbReference>
<dbReference type="InterPro" id="IPR000568">
    <property type="entry name" value="ATP_synth_F0_asu"/>
</dbReference>
<dbReference type="InterPro" id="IPR023011">
    <property type="entry name" value="ATP_synth_F0_asu_AS"/>
</dbReference>
<dbReference type="InterPro" id="IPR035908">
    <property type="entry name" value="F0_ATP_A_sf"/>
</dbReference>
<dbReference type="NCBIfam" id="TIGR01131">
    <property type="entry name" value="ATP_synt_6_or_A"/>
    <property type="match status" value="1"/>
</dbReference>
<dbReference type="NCBIfam" id="NF004477">
    <property type="entry name" value="PRK05815.1-1"/>
    <property type="match status" value="1"/>
</dbReference>
<dbReference type="PANTHER" id="PTHR42823">
    <property type="entry name" value="ATP SYNTHASE SUBUNIT A, CHLOROPLASTIC"/>
    <property type="match status" value="1"/>
</dbReference>
<dbReference type="PANTHER" id="PTHR42823:SF3">
    <property type="entry name" value="ATP SYNTHASE SUBUNIT A, CHLOROPLASTIC"/>
    <property type="match status" value="1"/>
</dbReference>
<dbReference type="Pfam" id="PF00119">
    <property type="entry name" value="ATP-synt_A"/>
    <property type="match status" value="1"/>
</dbReference>
<dbReference type="PRINTS" id="PR00123">
    <property type="entry name" value="ATPASEA"/>
</dbReference>
<dbReference type="SUPFAM" id="SSF81336">
    <property type="entry name" value="F1F0 ATP synthase subunit A"/>
    <property type="match status" value="1"/>
</dbReference>
<dbReference type="PROSITE" id="PS00449">
    <property type="entry name" value="ATPASE_A"/>
    <property type="match status" value="1"/>
</dbReference>